<keyword id="KW-0479">Metal-binding</keyword>
<keyword id="KW-0597">Phosphoprotein</keyword>
<keyword id="KW-1267">Proteomics identification</keyword>
<keyword id="KW-1185">Reference proteome</keyword>
<keyword id="KW-0862">Zinc</keyword>
<keyword id="KW-0863">Zinc-finger</keyword>
<gene>
    <name type="primary">RNF208</name>
</gene>
<feature type="chain" id="PRO_0000274613" description="RING finger protein 208">
    <location>
        <begin position="1"/>
        <end position="261"/>
    </location>
</feature>
<feature type="zinc finger region" description="RING-type" evidence="1">
    <location>
        <begin position="143"/>
        <end position="190"/>
    </location>
</feature>
<feature type="region of interest" description="Disordered" evidence="2">
    <location>
        <begin position="83"/>
        <end position="106"/>
    </location>
</feature>
<feature type="modified residue" description="Phosphoserine" evidence="4">
    <location>
        <position position="102"/>
    </location>
</feature>
<protein>
    <recommendedName>
        <fullName>RING finger protein 208</fullName>
    </recommendedName>
</protein>
<comment type="interaction">
    <interactant intactId="EBI-751555">
        <id>Q9H0X6</id>
    </interactant>
    <interactant intactId="EBI-491169">
        <id>P07550</id>
        <label>ADRB2</label>
    </interactant>
    <organismsDiffer>false</organismsDiffer>
    <experiments>3</experiments>
</comment>
<comment type="interaction">
    <interactant intactId="EBI-751555">
        <id>Q9H0X6</id>
    </interactant>
    <interactant intactId="EBI-11954292">
        <id>Q86V38</id>
        <label>ATN1</label>
    </interactant>
    <organismsDiffer>false</organismsDiffer>
    <experiments>3</experiments>
</comment>
<comment type="interaction">
    <interactant intactId="EBI-751555">
        <id>Q9H0X6</id>
    </interactant>
    <interactant intactId="EBI-25837549">
        <id>P28329-3</id>
        <label>CHAT</label>
    </interactant>
    <organismsDiffer>false</organismsDiffer>
    <experiments>3</experiments>
</comment>
<comment type="interaction">
    <interactant intactId="EBI-751555">
        <id>Q9H0X6</id>
    </interactant>
    <interactant intactId="EBI-10192698">
        <id>Q02930-3</id>
        <label>CREB5</label>
    </interactant>
    <organismsDiffer>false</organismsDiffer>
    <experiments>3</experiments>
</comment>
<comment type="interaction">
    <interactant intactId="EBI-751555">
        <id>Q9H0X6</id>
    </interactant>
    <interactant intactId="EBI-724310">
        <id>Q15038</id>
        <label>DAZAP2</label>
    </interactant>
    <organismsDiffer>false</organismsDiffer>
    <experiments>10</experiments>
</comment>
<comment type="interaction">
    <interactant intactId="EBI-751555">
        <id>Q9H0X6</id>
    </interactant>
    <interactant intactId="EBI-348399">
        <id>P22607</id>
        <label>FGFR3</label>
    </interactant>
    <organismsDiffer>false</organismsDiffer>
    <experiments>3</experiments>
</comment>
<comment type="interaction">
    <interactant intactId="EBI-751555">
        <id>Q9H0X6</id>
    </interactant>
    <interactant intactId="EBI-401755">
        <id>P62993</id>
        <label>GRB2</label>
    </interactant>
    <organismsDiffer>false</organismsDiffer>
    <experiments>3</experiments>
</comment>
<comment type="interaction">
    <interactant intactId="EBI-751555">
        <id>Q9H0X6</id>
    </interactant>
    <interactant intactId="EBI-8285963">
        <id>Q14957</id>
        <label>GRIN2C</label>
    </interactant>
    <organismsDiffer>false</organismsDiffer>
    <experiments>3</experiments>
</comment>
<comment type="interaction">
    <interactant intactId="EBI-751555">
        <id>Q9H0X6</id>
    </interactant>
    <interactant intactId="EBI-747754">
        <id>P28799</id>
        <label>GRN</label>
    </interactant>
    <organismsDiffer>false</organismsDiffer>
    <experiments>3</experiments>
</comment>
<comment type="interaction">
    <interactant intactId="EBI-751555">
        <id>Q9H0X6</id>
    </interactant>
    <interactant intactId="EBI-740785">
        <id>P49639</id>
        <label>HOXA1</label>
    </interactant>
    <organismsDiffer>false</organismsDiffer>
    <experiments>3</experiments>
</comment>
<comment type="interaction">
    <interactant intactId="EBI-751555">
        <id>Q9H0X6</id>
    </interactant>
    <interactant intactId="EBI-10975473">
        <id>O60333-2</id>
        <label>KIF1B</label>
    </interactant>
    <organismsDiffer>false</organismsDiffer>
    <experiments>3</experiments>
</comment>
<comment type="interaction">
    <interactant intactId="EBI-751555">
        <id>Q9H0X6</id>
    </interactant>
    <interactant intactId="EBI-2432309">
        <id>Q92876</id>
        <label>KLK6</label>
    </interactant>
    <organismsDiffer>false</organismsDiffer>
    <experiments>3</experiments>
</comment>
<comment type="interaction">
    <interactant intactId="EBI-751555">
        <id>Q9H0X6</id>
    </interactant>
    <interactant intactId="EBI-11992140">
        <id>Q3LI76</id>
        <label>KRTAP15-1</label>
    </interactant>
    <organismsDiffer>false</organismsDiffer>
    <experiments>3</experiments>
</comment>
<comment type="interaction">
    <interactant intactId="EBI-751555">
        <id>Q9H0X6</id>
    </interactant>
    <interactant intactId="EBI-3957672">
        <id>Q6PEX3</id>
        <label>KRTAP26-1</label>
    </interactant>
    <organismsDiffer>false</organismsDiffer>
    <experiments>3</experiments>
</comment>
<comment type="interaction">
    <interactant intactId="EBI-751555">
        <id>Q9H0X6</id>
    </interactant>
    <interactant intactId="EBI-725647">
        <id>Q99732</id>
        <label>LITAF</label>
    </interactant>
    <organismsDiffer>false</organismsDiffer>
    <experiments>3</experiments>
</comment>
<comment type="interaction">
    <interactant intactId="EBI-751555">
        <id>Q9H0X6</id>
    </interactant>
    <interactant intactId="EBI-12813389">
        <id>Q8TDS5</id>
        <label>OXER1</label>
    </interactant>
    <organismsDiffer>false</organismsDiffer>
    <experiments>3</experiments>
</comment>
<comment type="interaction">
    <interactant intactId="EBI-751555">
        <id>Q9H0X6</id>
    </interactant>
    <interactant intactId="EBI-714158">
        <id>Q13526</id>
        <label>PIN1</label>
    </interactant>
    <organismsDiffer>false</organismsDiffer>
    <experiments>3</experiments>
</comment>
<comment type="interaction">
    <interactant intactId="EBI-751555">
        <id>Q9H0X6</id>
    </interactant>
    <interactant intactId="EBI-396669">
        <id>Q9Y3C5</id>
        <label>RNF11</label>
    </interactant>
    <organismsDiffer>false</organismsDiffer>
    <experiments>3</experiments>
</comment>
<comment type="interaction">
    <interactant intactId="EBI-751555">
        <id>Q9H0X6</id>
    </interactant>
    <interactant intactId="EBI-2341200">
        <id>Q9H0F5</id>
        <label>RNF38</label>
    </interactant>
    <organismsDiffer>false</organismsDiffer>
    <experiments>3</experiments>
</comment>
<comment type="interaction">
    <interactant intactId="EBI-751555">
        <id>Q9H0X6</id>
    </interactant>
    <interactant intactId="EBI-744831">
        <id>P49247</id>
        <label>RPIA</label>
    </interactant>
    <organismsDiffer>false</organismsDiffer>
    <experiments>3</experiments>
</comment>
<comment type="interaction">
    <interactant intactId="EBI-751555">
        <id>Q9H0X6</id>
    </interactant>
    <interactant intactId="EBI-5235340">
        <id>Q7Z699</id>
        <label>SPRED1</label>
    </interactant>
    <organismsDiffer>false</organismsDiffer>
    <experiments>3</experiments>
</comment>
<comment type="interaction">
    <interactant intactId="EBI-751555">
        <id>Q9H0X6</id>
    </interactant>
    <interactant intactId="EBI-2652799">
        <id>Q99469</id>
        <label>STAC</label>
    </interactant>
    <organismsDiffer>false</organismsDiffer>
    <experiments>3</experiments>
</comment>
<comment type="interaction">
    <interactant intactId="EBI-751555">
        <id>Q9H0X6</id>
    </interactant>
    <interactant intactId="EBI-741480">
        <id>Q9UMX0</id>
        <label>UBQLN1</label>
    </interactant>
    <organismsDiffer>false</organismsDiffer>
    <experiments>3</experiments>
</comment>
<comment type="interaction">
    <interactant intactId="EBI-751555">
        <id>Q9H0X6</id>
    </interactant>
    <interactant intactId="EBI-947187">
        <id>Q9UHD9</id>
        <label>UBQLN2</label>
    </interactant>
    <organismsDiffer>false</organismsDiffer>
    <experiments>6</experiments>
</comment>
<comment type="interaction">
    <interactant intactId="EBI-751555">
        <id>Q9H0X6</id>
    </interactant>
    <interactant intactId="EBI-11975223">
        <id>Q70EL1-9</id>
        <label>USP54</label>
    </interactant>
    <organismsDiffer>false</organismsDiffer>
    <experiments>3</experiments>
</comment>
<comment type="interaction">
    <interactant intactId="EBI-751555">
        <id>Q9H0X6</id>
    </interactant>
    <interactant intactId="EBI-720609">
        <id>O76024</id>
        <label>WFS1</label>
    </interactant>
    <organismsDiffer>false</organismsDiffer>
    <experiments>3</experiments>
</comment>
<comment type="sequence caution" evidence="3">
    <conflict type="erroneous initiation">
        <sequence resource="EMBL-CDS" id="AAH16958"/>
    </conflict>
    <text>Truncated N-terminus.</text>
</comment>
<comment type="sequence caution" evidence="3">
    <conflict type="miscellaneous discrepancy">
        <sequence resource="EMBL-CDS" id="AAH16958"/>
    </conflict>
    <text>Contaminating sequence. Sequence of unknown origin in the N-terminal part.</text>
</comment>
<comment type="sequence caution" evidence="3">
    <conflict type="erroneous initiation">
        <sequence resource="EMBL-CDS" id="AAL16809"/>
    </conflict>
</comment>
<comment type="sequence caution" evidence="3">
    <conflict type="erroneous initiation">
        <sequence resource="EMBL-CDS" id="CAB66475"/>
    </conflict>
</comment>
<name>RN208_HUMAN</name>
<organism>
    <name type="scientific">Homo sapiens</name>
    <name type="common">Human</name>
    <dbReference type="NCBI Taxonomy" id="9606"/>
    <lineage>
        <taxon>Eukaryota</taxon>
        <taxon>Metazoa</taxon>
        <taxon>Chordata</taxon>
        <taxon>Craniata</taxon>
        <taxon>Vertebrata</taxon>
        <taxon>Euteleostomi</taxon>
        <taxon>Mammalia</taxon>
        <taxon>Eutheria</taxon>
        <taxon>Euarchontoglires</taxon>
        <taxon>Primates</taxon>
        <taxon>Haplorrhini</taxon>
        <taxon>Catarrhini</taxon>
        <taxon>Hominidae</taxon>
        <taxon>Homo</taxon>
    </lineage>
</organism>
<evidence type="ECO:0000255" key="1">
    <source>
        <dbReference type="PROSITE-ProRule" id="PRU00175"/>
    </source>
</evidence>
<evidence type="ECO:0000256" key="2">
    <source>
        <dbReference type="SAM" id="MobiDB-lite"/>
    </source>
</evidence>
<evidence type="ECO:0000305" key="3"/>
<evidence type="ECO:0007744" key="4">
    <source>
    </source>
</evidence>
<accession>Q9H0X6</accession>
<accession>A2BFA0</accession>
<reference key="1">
    <citation type="journal article" date="2004" name="Nature">
        <title>DNA sequence and analysis of human chromosome 9.</title>
        <authorList>
            <person name="Humphray S.J."/>
            <person name="Oliver K."/>
            <person name="Hunt A.R."/>
            <person name="Plumb R.W."/>
            <person name="Loveland J.E."/>
            <person name="Howe K.L."/>
            <person name="Andrews T.D."/>
            <person name="Searle S."/>
            <person name="Hunt S.E."/>
            <person name="Scott C.E."/>
            <person name="Jones M.C."/>
            <person name="Ainscough R."/>
            <person name="Almeida J.P."/>
            <person name="Ambrose K.D."/>
            <person name="Ashwell R.I.S."/>
            <person name="Babbage A.K."/>
            <person name="Babbage S."/>
            <person name="Bagguley C.L."/>
            <person name="Bailey J."/>
            <person name="Banerjee R."/>
            <person name="Barker D.J."/>
            <person name="Barlow K.F."/>
            <person name="Bates K."/>
            <person name="Beasley H."/>
            <person name="Beasley O."/>
            <person name="Bird C.P."/>
            <person name="Bray-Allen S."/>
            <person name="Brown A.J."/>
            <person name="Brown J.Y."/>
            <person name="Burford D."/>
            <person name="Burrill W."/>
            <person name="Burton J."/>
            <person name="Carder C."/>
            <person name="Carter N.P."/>
            <person name="Chapman J.C."/>
            <person name="Chen Y."/>
            <person name="Clarke G."/>
            <person name="Clark S.Y."/>
            <person name="Clee C.M."/>
            <person name="Clegg S."/>
            <person name="Collier R.E."/>
            <person name="Corby N."/>
            <person name="Crosier M."/>
            <person name="Cummings A.T."/>
            <person name="Davies J."/>
            <person name="Dhami P."/>
            <person name="Dunn M."/>
            <person name="Dutta I."/>
            <person name="Dyer L.W."/>
            <person name="Earthrowl M.E."/>
            <person name="Faulkner L."/>
            <person name="Fleming C.J."/>
            <person name="Frankish A."/>
            <person name="Frankland J.A."/>
            <person name="French L."/>
            <person name="Fricker D.G."/>
            <person name="Garner P."/>
            <person name="Garnett J."/>
            <person name="Ghori J."/>
            <person name="Gilbert J.G.R."/>
            <person name="Glison C."/>
            <person name="Grafham D.V."/>
            <person name="Gribble S."/>
            <person name="Griffiths C."/>
            <person name="Griffiths-Jones S."/>
            <person name="Grocock R."/>
            <person name="Guy J."/>
            <person name="Hall R.E."/>
            <person name="Hammond S."/>
            <person name="Harley J.L."/>
            <person name="Harrison E.S.I."/>
            <person name="Hart E.A."/>
            <person name="Heath P.D."/>
            <person name="Henderson C.D."/>
            <person name="Hopkins B.L."/>
            <person name="Howard P.J."/>
            <person name="Howden P.J."/>
            <person name="Huckle E."/>
            <person name="Johnson C."/>
            <person name="Johnson D."/>
            <person name="Joy A.A."/>
            <person name="Kay M."/>
            <person name="Keenan S."/>
            <person name="Kershaw J.K."/>
            <person name="Kimberley A.M."/>
            <person name="King A."/>
            <person name="Knights A."/>
            <person name="Laird G.K."/>
            <person name="Langford C."/>
            <person name="Lawlor S."/>
            <person name="Leongamornlert D.A."/>
            <person name="Leversha M."/>
            <person name="Lloyd C."/>
            <person name="Lloyd D.M."/>
            <person name="Lovell J."/>
            <person name="Martin S."/>
            <person name="Mashreghi-Mohammadi M."/>
            <person name="Matthews L."/>
            <person name="McLaren S."/>
            <person name="McLay K.E."/>
            <person name="McMurray A."/>
            <person name="Milne S."/>
            <person name="Nickerson T."/>
            <person name="Nisbett J."/>
            <person name="Nordsiek G."/>
            <person name="Pearce A.V."/>
            <person name="Peck A.I."/>
            <person name="Porter K.M."/>
            <person name="Pandian R."/>
            <person name="Pelan S."/>
            <person name="Phillimore B."/>
            <person name="Povey S."/>
            <person name="Ramsey Y."/>
            <person name="Rand V."/>
            <person name="Scharfe M."/>
            <person name="Sehra H.K."/>
            <person name="Shownkeen R."/>
            <person name="Sims S.K."/>
            <person name="Skuce C.D."/>
            <person name="Smith M."/>
            <person name="Steward C.A."/>
            <person name="Swarbreck D."/>
            <person name="Sycamore N."/>
            <person name="Tester J."/>
            <person name="Thorpe A."/>
            <person name="Tracey A."/>
            <person name="Tromans A."/>
            <person name="Thomas D.W."/>
            <person name="Wall M."/>
            <person name="Wallis J.M."/>
            <person name="West A.P."/>
            <person name="Whitehead S.L."/>
            <person name="Willey D.L."/>
            <person name="Williams S.A."/>
            <person name="Wilming L."/>
            <person name="Wray P.W."/>
            <person name="Young L."/>
            <person name="Ashurst J.L."/>
            <person name="Coulson A."/>
            <person name="Blocker H."/>
            <person name="Durbin R.M."/>
            <person name="Sulston J.E."/>
            <person name="Hubbard T."/>
            <person name="Jackson M.J."/>
            <person name="Bentley D.R."/>
            <person name="Beck S."/>
            <person name="Rogers J."/>
            <person name="Dunham I."/>
        </authorList>
    </citation>
    <scope>NUCLEOTIDE SEQUENCE [LARGE SCALE GENOMIC DNA]</scope>
</reference>
<reference key="2">
    <citation type="journal article" date="2001" name="Genome Res.">
        <title>Towards a catalog of human genes and proteins: sequencing and analysis of 500 novel complete protein coding human cDNAs.</title>
        <authorList>
            <person name="Wiemann S."/>
            <person name="Weil B."/>
            <person name="Wellenreuther R."/>
            <person name="Gassenhuber J."/>
            <person name="Glassl S."/>
            <person name="Ansorge W."/>
            <person name="Boecher M."/>
            <person name="Bloecker H."/>
            <person name="Bauersachs S."/>
            <person name="Blum H."/>
            <person name="Lauber J."/>
            <person name="Duesterhoeft A."/>
            <person name="Beyer A."/>
            <person name="Koehrer K."/>
            <person name="Strack N."/>
            <person name="Mewes H.-W."/>
            <person name="Ottenwaelder B."/>
            <person name="Obermaier B."/>
            <person name="Tampe J."/>
            <person name="Heubner D."/>
            <person name="Wambutt R."/>
            <person name="Korn B."/>
            <person name="Klein M."/>
            <person name="Poustka A."/>
        </authorList>
    </citation>
    <scope>NUCLEOTIDE SEQUENCE [LARGE SCALE MRNA] OF 70-261</scope>
    <source>
        <tissue>Amygdala</tissue>
    </source>
</reference>
<reference key="3">
    <citation type="submission" date="2001-09" db="EMBL/GenBank/DDBJ databases">
        <authorList>
            <person name="Kang L."/>
            <person name="Zhang B."/>
            <person name="Zhou Y."/>
            <person name="Peng X."/>
            <person name="Yuan J."/>
            <person name="Qiang B."/>
        </authorList>
    </citation>
    <scope>NUCLEOTIDE SEQUENCE [MRNA] OF 71-261</scope>
    <source>
        <tissue>Fetal brain</tissue>
    </source>
</reference>
<reference key="4">
    <citation type="journal article" date="2004" name="Genome Res.">
        <title>The status, quality, and expansion of the NIH full-length cDNA project: the Mammalian Gene Collection (MGC).</title>
        <authorList>
            <consortium name="The MGC Project Team"/>
        </authorList>
    </citation>
    <scope>NUCLEOTIDE SEQUENCE [LARGE SCALE MRNA] OF 77-261</scope>
    <source>
        <tissue>Brain</tissue>
    </source>
</reference>
<reference key="5">
    <citation type="journal article" date="2009" name="Sci. Signal.">
        <title>Quantitative phosphoproteomic analysis of T cell receptor signaling reveals system-wide modulation of protein-protein interactions.</title>
        <authorList>
            <person name="Mayya V."/>
            <person name="Lundgren D.H."/>
            <person name="Hwang S.-I."/>
            <person name="Rezaul K."/>
            <person name="Wu L."/>
            <person name="Eng J.K."/>
            <person name="Rodionov V."/>
            <person name="Han D.K."/>
        </authorList>
    </citation>
    <scope>PHOSPHORYLATION [LARGE SCALE ANALYSIS] AT SER-102</scope>
    <scope>IDENTIFICATION BY MASS SPECTROMETRY [LARGE SCALE ANALYSIS]</scope>
    <source>
        <tissue>Leukemic T-cell</tissue>
    </source>
</reference>
<sequence length="261" mass="27964">MPSDPGPEAGSGWPGLLMSCLKGPHVILKMEAMKIVHPEKFPELPAAPCFPPAPRPTPTLAPKRAWPSDTEIIVNQACGGDMPALEGAPHTPPLPRRPRKGSSELGFPRVAPEDEVIVNQYVIRPGPSASAASSAAAGEPLECPTCGHSYNVTQRRPRVLSCLHSVCEQCLQILYESCPKYKFISCPTCRRETVLFTDYGLAALAVNTSILSRLPPEALTAPSGGQWGAEPEGSCYQTFRQYCGAACTCHVRNPLSACSIM</sequence>
<dbReference type="EMBL" id="BX255925">
    <property type="status" value="NOT_ANNOTATED_CDS"/>
    <property type="molecule type" value="Genomic_DNA"/>
</dbReference>
<dbReference type="EMBL" id="AL136540">
    <property type="protein sequence ID" value="CAB66475.1"/>
    <property type="status" value="ALT_INIT"/>
    <property type="molecule type" value="mRNA"/>
</dbReference>
<dbReference type="EMBL" id="AF416715">
    <property type="protein sequence ID" value="AAL16809.1"/>
    <property type="status" value="ALT_INIT"/>
    <property type="molecule type" value="mRNA"/>
</dbReference>
<dbReference type="EMBL" id="BC016958">
    <property type="protein sequence ID" value="AAH16958.1"/>
    <property type="status" value="ALT_SEQ"/>
    <property type="molecule type" value="mRNA"/>
</dbReference>
<dbReference type="CCDS" id="CCDS7037.2"/>
<dbReference type="RefSeq" id="NP_001375226.1">
    <property type="nucleotide sequence ID" value="NM_001388297.1"/>
</dbReference>
<dbReference type="RefSeq" id="NP_001375227.1">
    <property type="nucleotide sequence ID" value="NM_001388298.1"/>
</dbReference>
<dbReference type="RefSeq" id="NP_112587.2">
    <property type="nucleotide sequence ID" value="NM_031297.7"/>
</dbReference>
<dbReference type="SMR" id="Q9H0X6"/>
<dbReference type="BioGRID" id="608244">
    <property type="interactions" value="74"/>
</dbReference>
<dbReference type="FunCoup" id="Q9H0X6">
    <property type="interactions" value="994"/>
</dbReference>
<dbReference type="IntAct" id="Q9H0X6">
    <property type="interactions" value="28"/>
</dbReference>
<dbReference type="MINT" id="Q9H0X6"/>
<dbReference type="STRING" id="9606.ENSP00000376572"/>
<dbReference type="GlyGen" id="Q9H0X6">
    <property type="glycosylation" value="1 site"/>
</dbReference>
<dbReference type="iPTMnet" id="Q9H0X6"/>
<dbReference type="PhosphoSitePlus" id="Q9H0X6"/>
<dbReference type="BioMuta" id="RNF208"/>
<dbReference type="DMDM" id="239938696"/>
<dbReference type="jPOST" id="Q9H0X6"/>
<dbReference type="MassIVE" id="Q9H0X6"/>
<dbReference type="PaxDb" id="9606-ENSP00000376572"/>
<dbReference type="PeptideAtlas" id="Q9H0X6"/>
<dbReference type="ProteomicsDB" id="80341"/>
<dbReference type="Antibodypedia" id="32414">
    <property type="antibodies" value="77 antibodies from 15 providers"/>
</dbReference>
<dbReference type="DNASU" id="727800"/>
<dbReference type="Ensembl" id="ENST00000391553.3">
    <property type="protein sequence ID" value="ENSP00000375397.1"/>
    <property type="gene ID" value="ENSG00000212864.4"/>
</dbReference>
<dbReference type="Ensembl" id="ENST00000392827.2">
    <property type="protein sequence ID" value="ENSP00000376572.1"/>
    <property type="gene ID" value="ENSG00000212864.4"/>
</dbReference>
<dbReference type="GeneID" id="727800"/>
<dbReference type="KEGG" id="hsa:727800"/>
<dbReference type="MANE-Select" id="ENST00000391553.3">
    <property type="protein sequence ID" value="ENSP00000375397.1"/>
    <property type="RefSeq nucleotide sequence ID" value="NM_031297.7"/>
    <property type="RefSeq protein sequence ID" value="NP_112587.2"/>
</dbReference>
<dbReference type="UCSC" id="uc004clz.2">
    <property type="organism name" value="human"/>
</dbReference>
<dbReference type="AGR" id="HGNC:25420"/>
<dbReference type="CTD" id="727800"/>
<dbReference type="DisGeNET" id="727800"/>
<dbReference type="GeneCards" id="RNF208"/>
<dbReference type="HGNC" id="HGNC:25420">
    <property type="gene designation" value="RNF208"/>
</dbReference>
<dbReference type="HPA" id="ENSG00000212864">
    <property type="expression patterns" value="Tissue enhanced (brain)"/>
</dbReference>
<dbReference type="MIM" id="618993">
    <property type="type" value="gene"/>
</dbReference>
<dbReference type="neXtProt" id="NX_Q9H0X6"/>
<dbReference type="OpenTargets" id="ENSG00000212864"/>
<dbReference type="PharmGKB" id="PA162401649"/>
<dbReference type="VEuPathDB" id="HostDB:ENSG00000212864"/>
<dbReference type="eggNOG" id="KOG2177">
    <property type="taxonomic scope" value="Eukaryota"/>
</dbReference>
<dbReference type="GeneTree" id="ENSGT00680000100126"/>
<dbReference type="HOGENOM" id="CLU_061185_0_0_1"/>
<dbReference type="InParanoid" id="Q9H0X6"/>
<dbReference type="OMA" id="IVNQYVV"/>
<dbReference type="OrthoDB" id="342730at2759"/>
<dbReference type="PAN-GO" id="Q9H0X6">
    <property type="GO annotations" value="2 GO annotations based on evolutionary models"/>
</dbReference>
<dbReference type="PhylomeDB" id="Q9H0X6"/>
<dbReference type="TreeFam" id="TF331869"/>
<dbReference type="PathwayCommons" id="Q9H0X6"/>
<dbReference type="SignaLink" id="Q9H0X6"/>
<dbReference type="SIGNOR" id="Q9H0X6"/>
<dbReference type="BioGRID-ORCS" id="727800">
    <property type="hits" value="24 hits in 1189 CRISPR screens"/>
</dbReference>
<dbReference type="ChiTaRS" id="RNF208">
    <property type="organism name" value="human"/>
</dbReference>
<dbReference type="GenomeRNAi" id="727800"/>
<dbReference type="Pharos" id="Q9H0X6">
    <property type="development level" value="Tbio"/>
</dbReference>
<dbReference type="PRO" id="PR:Q9H0X6"/>
<dbReference type="Proteomes" id="UP000005640">
    <property type="component" value="Chromosome 9"/>
</dbReference>
<dbReference type="RNAct" id="Q9H0X6">
    <property type="molecule type" value="protein"/>
</dbReference>
<dbReference type="Bgee" id="ENSG00000212864">
    <property type="expression patterns" value="Expressed in right frontal lobe and 100 other cell types or tissues"/>
</dbReference>
<dbReference type="GO" id="GO:0005829">
    <property type="term" value="C:cytosol"/>
    <property type="evidence" value="ECO:0000314"/>
    <property type="project" value="HPA"/>
</dbReference>
<dbReference type="GO" id="GO:0005654">
    <property type="term" value="C:nucleoplasm"/>
    <property type="evidence" value="ECO:0000314"/>
    <property type="project" value="HPA"/>
</dbReference>
<dbReference type="GO" id="GO:0061630">
    <property type="term" value="F:ubiquitin protein ligase activity"/>
    <property type="evidence" value="ECO:0000318"/>
    <property type="project" value="GO_Central"/>
</dbReference>
<dbReference type="GO" id="GO:0004842">
    <property type="term" value="F:ubiquitin-protein transferase activity"/>
    <property type="evidence" value="ECO:0000314"/>
    <property type="project" value="FlyBase"/>
</dbReference>
<dbReference type="GO" id="GO:0008270">
    <property type="term" value="F:zinc ion binding"/>
    <property type="evidence" value="ECO:0007669"/>
    <property type="project" value="UniProtKB-KW"/>
</dbReference>
<dbReference type="GO" id="GO:0051865">
    <property type="term" value="P:protein autoubiquitination"/>
    <property type="evidence" value="ECO:0000314"/>
    <property type="project" value="FlyBase"/>
</dbReference>
<dbReference type="GO" id="GO:0016567">
    <property type="term" value="P:protein ubiquitination"/>
    <property type="evidence" value="ECO:0000318"/>
    <property type="project" value="GO_Central"/>
</dbReference>
<dbReference type="CDD" id="cd16559">
    <property type="entry name" value="RING-HC_RNF208"/>
    <property type="match status" value="1"/>
</dbReference>
<dbReference type="FunFam" id="3.30.40.10:FF:000403">
    <property type="entry name" value="RING finger protein 208"/>
    <property type="match status" value="1"/>
</dbReference>
<dbReference type="Gene3D" id="3.30.40.10">
    <property type="entry name" value="Zinc/RING finger domain, C3HC4 (zinc finger)"/>
    <property type="match status" value="1"/>
</dbReference>
<dbReference type="InterPro" id="IPR051435">
    <property type="entry name" value="RING_finger_E3_ubiq-ligases"/>
</dbReference>
<dbReference type="InterPro" id="IPR040100">
    <property type="entry name" value="RNF208_RING-HC"/>
</dbReference>
<dbReference type="InterPro" id="IPR001841">
    <property type="entry name" value="Znf_RING"/>
</dbReference>
<dbReference type="InterPro" id="IPR013083">
    <property type="entry name" value="Znf_RING/FYVE/PHD"/>
</dbReference>
<dbReference type="InterPro" id="IPR017907">
    <property type="entry name" value="Znf_RING_CS"/>
</dbReference>
<dbReference type="PANTHER" id="PTHR22791:SF3">
    <property type="entry name" value="RING FINGER PROTEIN 208"/>
    <property type="match status" value="1"/>
</dbReference>
<dbReference type="PANTHER" id="PTHR22791">
    <property type="entry name" value="RING-TYPE DOMAIN-CONTAINING PROTEIN"/>
    <property type="match status" value="1"/>
</dbReference>
<dbReference type="SUPFAM" id="SSF57850">
    <property type="entry name" value="RING/U-box"/>
    <property type="match status" value="1"/>
</dbReference>
<dbReference type="PROSITE" id="PS00518">
    <property type="entry name" value="ZF_RING_1"/>
    <property type="match status" value="1"/>
</dbReference>
<dbReference type="PROSITE" id="PS50089">
    <property type="entry name" value="ZF_RING_2"/>
    <property type="match status" value="1"/>
</dbReference>
<proteinExistence type="evidence at protein level"/>